<proteinExistence type="inferred from homology"/>
<organism>
    <name type="scientific">Hydrogenovibrio crunogenus (strain DSM 25203 / XCL-2)</name>
    <name type="common">Thiomicrospira crunogena</name>
    <dbReference type="NCBI Taxonomy" id="317025"/>
    <lineage>
        <taxon>Bacteria</taxon>
        <taxon>Pseudomonadati</taxon>
        <taxon>Pseudomonadota</taxon>
        <taxon>Gammaproteobacteria</taxon>
        <taxon>Thiotrichales</taxon>
        <taxon>Piscirickettsiaceae</taxon>
        <taxon>Hydrogenovibrio</taxon>
    </lineage>
</organism>
<gene>
    <name evidence="1" type="primary">nadD</name>
    <name type="ordered locus">Tcr_0484</name>
</gene>
<name>NADD_HYDCU</name>
<sequence>MQTNRLIGINGGTFDPIHFGHLRPALEVLHALHLDEMRFIPAYQPVHRASPSVSAQQRCEMVQLAIQNQPSFKLDTIELDLGGPSYTVNTLEALKKAEPDASFVLMMGTDAFAKFNQWHDWQGVLNLANIVVTHRPGEPVPRDGEVGQIFMNHWVPNLTEASGQIVDLPVTQLDLSATALRSYLKNGDPVDYLMPENVARYIYEHQLYQ</sequence>
<keyword id="KW-0067">ATP-binding</keyword>
<keyword id="KW-0520">NAD</keyword>
<keyword id="KW-0547">Nucleotide-binding</keyword>
<keyword id="KW-0548">Nucleotidyltransferase</keyword>
<keyword id="KW-0662">Pyridine nucleotide biosynthesis</keyword>
<keyword id="KW-0808">Transferase</keyword>
<evidence type="ECO:0000255" key="1">
    <source>
        <dbReference type="HAMAP-Rule" id="MF_00244"/>
    </source>
</evidence>
<protein>
    <recommendedName>
        <fullName evidence="1">Probable nicotinate-nucleotide adenylyltransferase</fullName>
        <ecNumber evidence="1">2.7.7.18</ecNumber>
    </recommendedName>
    <alternativeName>
        <fullName evidence="1">Deamido-NAD(+) diphosphorylase</fullName>
    </alternativeName>
    <alternativeName>
        <fullName evidence="1">Deamido-NAD(+) pyrophosphorylase</fullName>
    </alternativeName>
    <alternativeName>
        <fullName evidence="1">Nicotinate mononucleotide adenylyltransferase</fullName>
        <shortName evidence="1">NaMN adenylyltransferase</shortName>
    </alternativeName>
</protein>
<feature type="chain" id="PRO_0000336747" description="Probable nicotinate-nucleotide adenylyltransferase">
    <location>
        <begin position="1"/>
        <end position="209"/>
    </location>
</feature>
<dbReference type="EC" id="2.7.7.18" evidence="1"/>
<dbReference type="EMBL" id="CP000109">
    <property type="protein sequence ID" value="ABB41080.1"/>
    <property type="molecule type" value="Genomic_DNA"/>
</dbReference>
<dbReference type="SMR" id="Q31IE3"/>
<dbReference type="STRING" id="317025.Tcr_0484"/>
<dbReference type="KEGG" id="tcx:Tcr_0484"/>
<dbReference type="eggNOG" id="COG1057">
    <property type="taxonomic scope" value="Bacteria"/>
</dbReference>
<dbReference type="HOGENOM" id="CLU_069765_0_0_6"/>
<dbReference type="OrthoDB" id="5295945at2"/>
<dbReference type="UniPathway" id="UPA00253">
    <property type="reaction ID" value="UER00332"/>
</dbReference>
<dbReference type="GO" id="GO:0005524">
    <property type="term" value="F:ATP binding"/>
    <property type="evidence" value="ECO:0007669"/>
    <property type="project" value="UniProtKB-KW"/>
</dbReference>
<dbReference type="GO" id="GO:0004515">
    <property type="term" value="F:nicotinate-nucleotide adenylyltransferase activity"/>
    <property type="evidence" value="ECO:0007669"/>
    <property type="project" value="UniProtKB-UniRule"/>
</dbReference>
<dbReference type="GO" id="GO:0009435">
    <property type="term" value="P:NAD biosynthetic process"/>
    <property type="evidence" value="ECO:0007669"/>
    <property type="project" value="UniProtKB-UniRule"/>
</dbReference>
<dbReference type="CDD" id="cd02165">
    <property type="entry name" value="NMNAT"/>
    <property type="match status" value="1"/>
</dbReference>
<dbReference type="Gene3D" id="3.40.50.620">
    <property type="entry name" value="HUPs"/>
    <property type="match status" value="1"/>
</dbReference>
<dbReference type="HAMAP" id="MF_00244">
    <property type="entry name" value="NaMN_adenylyltr"/>
    <property type="match status" value="1"/>
</dbReference>
<dbReference type="InterPro" id="IPR004821">
    <property type="entry name" value="Cyt_trans-like"/>
</dbReference>
<dbReference type="InterPro" id="IPR005248">
    <property type="entry name" value="NadD/NMNAT"/>
</dbReference>
<dbReference type="InterPro" id="IPR014729">
    <property type="entry name" value="Rossmann-like_a/b/a_fold"/>
</dbReference>
<dbReference type="NCBIfam" id="TIGR00125">
    <property type="entry name" value="cyt_tran_rel"/>
    <property type="match status" value="1"/>
</dbReference>
<dbReference type="NCBIfam" id="TIGR00482">
    <property type="entry name" value="nicotinate (nicotinamide) nucleotide adenylyltransferase"/>
    <property type="match status" value="1"/>
</dbReference>
<dbReference type="NCBIfam" id="NF000839">
    <property type="entry name" value="PRK00071.1-1"/>
    <property type="match status" value="1"/>
</dbReference>
<dbReference type="NCBIfam" id="NF000840">
    <property type="entry name" value="PRK00071.1-3"/>
    <property type="match status" value="1"/>
</dbReference>
<dbReference type="PANTHER" id="PTHR39321">
    <property type="entry name" value="NICOTINATE-NUCLEOTIDE ADENYLYLTRANSFERASE-RELATED"/>
    <property type="match status" value="1"/>
</dbReference>
<dbReference type="PANTHER" id="PTHR39321:SF3">
    <property type="entry name" value="PHOSPHOPANTETHEINE ADENYLYLTRANSFERASE"/>
    <property type="match status" value="1"/>
</dbReference>
<dbReference type="Pfam" id="PF01467">
    <property type="entry name" value="CTP_transf_like"/>
    <property type="match status" value="1"/>
</dbReference>
<dbReference type="SUPFAM" id="SSF52374">
    <property type="entry name" value="Nucleotidylyl transferase"/>
    <property type="match status" value="1"/>
</dbReference>
<comment type="function">
    <text evidence="1">Catalyzes the reversible adenylation of nicotinate mononucleotide (NaMN) to nicotinic acid adenine dinucleotide (NaAD).</text>
</comment>
<comment type="catalytic activity">
    <reaction evidence="1">
        <text>nicotinate beta-D-ribonucleotide + ATP + H(+) = deamido-NAD(+) + diphosphate</text>
        <dbReference type="Rhea" id="RHEA:22860"/>
        <dbReference type="ChEBI" id="CHEBI:15378"/>
        <dbReference type="ChEBI" id="CHEBI:30616"/>
        <dbReference type="ChEBI" id="CHEBI:33019"/>
        <dbReference type="ChEBI" id="CHEBI:57502"/>
        <dbReference type="ChEBI" id="CHEBI:58437"/>
        <dbReference type="EC" id="2.7.7.18"/>
    </reaction>
</comment>
<comment type="pathway">
    <text evidence="1">Cofactor biosynthesis; NAD(+) biosynthesis; deamido-NAD(+) from nicotinate D-ribonucleotide: step 1/1.</text>
</comment>
<comment type="similarity">
    <text evidence="1">Belongs to the NadD family.</text>
</comment>
<accession>Q31IE3</accession>
<reference key="1">
    <citation type="journal article" date="2006" name="PLoS Biol.">
        <title>The genome of deep-sea vent chemolithoautotroph Thiomicrospira crunogena XCL-2.</title>
        <authorList>
            <person name="Scott K.M."/>
            <person name="Sievert S.M."/>
            <person name="Abril F.N."/>
            <person name="Ball L.A."/>
            <person name="Barrett C.J."/>
            <person name="Blake R.A."/>
            <person name="Boller A.J."/>
            <person name="Chain P.S.G."/>
            <person name="Clark J.A."/>
            <person name="Davis C.R."/>
            <person name="Detter C."/>
            <person name="Do K.F."/>
            <person name="Dobrinski K.P."/>
            <person name="Faza B.I."/>
            <person name="Fitzpatrick K.A."/>
            <person name="Freyermuth S.K."/>
            <person name="Harmer T.L."/>
            <person name="Hauser L.J."/>
            <person name="Huegler M."/>
            <person name="Kerfeld C.A."/>
            <person name="Klotz M.G."/>
            <person name="Kong W.W."/>
            <person name="Land M."/>
            <person name="Lapidus A."/>
            <person name="Larimer F.W."/>
            <person name="Longo D.L."/>
            <person name="Lucas S."/>
            <person name="Malfatti S.A."/>
            <person name="Massey S.E."/>
            <person name="Martin D.D."/>
            <person name="McCuddin Z."/>
            <person name="Meyer F."/>
            <person name="Moore J.L."/>
            <person name="Ocampo L.H. Jr."/>
            <person name="Paul J.H."/>
            <person name="Paulsen I.T."/>
            <person name="Reep D.K."/>
            <person name="Ren Q."/>
            <person name="Ross R.L."/>
            <person name="Sato P.Y."/>
            <person name="Thomas P."/>
            <person name="Tinkham L.E."/>
            <person name="Zeruth G.T."/>
        </authorList>
    </citation>
    <scope>NUCLEOTIDE SEQUENCE [LARGE SCALE GENOMIC DNA]</scope>
    <source>
        <strain>DSM 25203 / XCL-2</strain>
    </source>
</reference>